<reference key="1">
    <citation type="journal article" date="2005" name="Nature">
        <title>The map-based sequence of the rice genome.</title>
        <authorList>
            <consortium name="International rice genome sequencing project (IRGSP)"/>
        </authorList>
    </citation>
    <scope>NUCLEOTIDE SEQUENCE [LARGE SCALE GENOMIC DNA]</scope>
    <source>
        <strain>cv. Nipponbare</strain>
    </source>
</reference>
<reference key="2">
    <citation type="journal article" date="2008" name="Nucleic Acids Res.">
        <title>The rice annotation project database (RAP-DB): 2008 update.</title>
        <authorList>
            <consortium name="The rice annotation project (RAP)"/>
        </authorList>
    </citation>
    <scope>GENOME REANNOTATION</scope>
    <source>
        <strain>cv. Nipponbare</strain>
    </source>
</reference>
<reference key="3">
    <citation type="journal article" date="2013" name="Rice">
        <title>Improvement of the Oryza sativa Nipponbare reference genome using next generation sequence and optical map data.</title>
        <authorList>
            <person name="Kawahara Y."/>
            <person name="de la Bastide M."/>
            <person name="Hamilton J.P."/>
            <person name="Kanamori H."/>
            <person name="McCombie W.R."/>
            <person name="Ouyang S."/>
            <person name="Schwartz D.C."/>
            <person name="Tanaka T."/>
            <person name="Wu J."/>
            <person name="Zhou S."/>
            <person name="Childs K.L."/>
            <person name="Davidson R.M."/>
            <person name="Lin H."/>
            <person name="Quesada-Ocampo L."/>
            <person name="Vaillancourt B."/>
            <person name="Sakai H."/>
            <person name="Lee S.S."/>
            <person name="Kim J."/>
            <person name="Numa H."/>
            <person name="Itoh T."/>
            <person name="Buell C.R."/>
            <person name="Matsumoto T."/>
        </authorList>
    </citation>
    <scope>GENOME REANNOTATION</scope>
    <source>
        <strain>cv. Nipponbare</strain>
    </source>
</reference>
<reference key="4">
    <citation type="journal article" date="2005" name="PLoS Biol.">
        <title>The genomes of Oryza sativa: a history of duplications.</title>
        <authorList>
            <person name="Yu J."/>
            <person name="Wang J."/>
            <person name="Lin W."/>
            <person name="Li S."/>
            <person name="Li H."/>
            <person name="Zhou J."/>
            <person name="Ni P."/>
            <person name="Dong W."/>
            <person name="Hu S."/>
            <person name="Zeng C."/>
            <person name="Zhang J."/>
            <person name="Zhang Y."/>
            <person name="Li R."/>
            <person name="Xu Z."/>
            <person name="Li S."/>
            <person name="Li X."/>
            <person name="Zheng H."/>
            <person name="Cong L."/>
            <person name="Lin L."/>
            <person name="Yin J."/>
            <person name="Geng J."/>
            <person name="Li G."/>
            <person name="Shi J."/>
            <person name="Liu J."/>
            <person name="Lv H."/>
            <person name="Li J."/>
            <person name="Wang J."/>
            <person name="Deng Y."/>
            <person name="Ran L."/>
            <person name="Shi X."/>
            <person name="Wang X."/>
            <person name="Wu Q."/>
            <person name="Li C."/>
            <person name="Ren X."/>
            <person name="Wang J."/>
            <person name="Wang X."/>
            <person name="Li D."/>
            <person name="Liu D."/>
            <person name="Zhang X."/>
            <person name="Ji Z."/>
            <person name="Zhao W."/>
            <person name="Sun Y."/>
            <person name="Zhang Z."/>
            <person name="Bao J."/>
            <person name="Han Y."/>
            <person name="Dong L."/>
            <person name="Ji J."/>
            <person name="Chen P."/>
            <person name="Wu S."/>
            <person name="Liu J."/>
            <person name="Xiao Y."/>
            <person name="Bu D."/>
            <person name="Tan J."/>
            <person name="Yang L."/>
            <person name="Ye C."/>
            <person name="Zhang J."/>
            <person name="Xu J."/>
            <person name="Zhou Y."/>
            <person name="Yu Y."/>
            <person name="Zhang B."/>
            <person name="Zhuang S."/>
            <person name="Wei H."/>
            <person name="Liu B."/>
            <person name="Lei M."/>
            <person name="Yu H."/>
            <person name="Li Y."/>
            <person name="Xu H."/>
            <person name="Wei S."/>
            <person name="He X."/>
            <person name="Fang L."/>
            <person name="Zhang Z."/>
            <person name="Zhang Y."/>
            <person name="Huang X."/>
            <person name="Su Z."/>
            <person name="Tong W."/>
            <person name="Li J."/>
            <person name="Tong Z."/>
            <person name="Li S."/>
            <person name="Ye J."/>
            <person name="Wang L."/>
            <person name="Fang L."/>
            <person name="Lei T."/>
            <person name="Chen C.-S."/>
            <person name="Chen H.-C."/>
            <person name="Xu Z."/>
            <person name="Li H."/>
            <person name="Huang H."/>
            <person name="Zhang F."/>
            <person name="Xu H."/>
            <person name="Li N."/>
            <person name="Zhao C."/>
            <person name="Li S."/>
            <person name="Dong L."/>
            <person name="Huang Y."/>
            <person name="Li L."/>
            <person name="Xi Y."/>
            <person name="Qi Q."/>
            <person name="Li W."/>
            <person name="Zhang B."/>
            <person name="Hu W."/>
            <person name="Zhang Y."/>
            <person name="Tian X."/>
            <person name="Jiao Y."/>
            <person name="Liang X."/>
            <person name="Jin J."/>
            <person name="Gao L."/>
            <person name="Zheng W."/>
            <person name="Hao B."/>
            <person name="Liu S.-M."/>
            <person name="Wang W."/>
            <person name="Yuan L."/>
            <person name="Cao M."/>
            <person name="McDermott J."/>
            <person name="Samudrala R."/>
            <person name="Wang J."/>
            <person name="Wong G.K.-S."/>
            <person name="Yang H."/>
        </authorList>
    </citation>
    <scope>NUCLEOTIDE SEQUENCE [LARGE SCALE GENOMIC DNA]</scope>
    <source>
        <strain>cv. Nipponbare</strain>
    </source>
</reference>
<reference key="5">
    <citation type="journal article" date="2003" name="Science">
        <title>Collection, mapping, and annotation of over 28,000 cDNA clones from japonica rice.</title>
        <authorList>
            <consortium name="The rice full-length cDNA consortium"/>
        </authorList>
    </citation>
    <scope>NUCLEOTIDE SEQUENCE [LARGE SCALE MRNA]</scope>
    <source>
        <strain>cv. Nipponbare</strain>
    </source>
</reference>
<reference key="6">
    <citation type="journal article" date="2012" name="Planta">
        <title>Functional analysis of OsPUT1, a rice polyamine uptake transporter.</title>
        <authorList>
            <person name="Mulangi V."/>
            <person name="Phuntumart V."/>
            <person name="Aouida M."/>
            <person name="Ramotar D."/>
            <person name="Morris P."/>
        </authorList>
    </citation>
    <scope>FUNCTION</scope>
    <scope>BIOPHYSICOCHEMICAL PROPERTIES</scope>
    <scope>SUBCELLULAR LOCATION</scope>
    <scope>TISSUE SPECIFICITY</scope>
</reference>
<protein>
    <recommendedName>
        <fullName>Polyamine transporter PUT1</fullName>
    </recommendedName>
    <alternativeName>
        <fullName>Polyamine uptake transporter 1</fullName>
        <shortName>OsPUT1</shortName>
    </alternativeName>
</protein>
<organism>
    <name type="scientific">Oryza sativa subsp. japonica</name>
    <name type="common">Rice</name>
    <dbReference type="NCBI Taxonomy" id="39947"/>
    <lineage>
        <taxon>Eukaryota</taxon>
        <taxon>Viridiplantae</taxon>
        <taxon>Streptophyta</taxon>
        <taxon>Embryophyta</taxon>
        <taxon>Tracheophyta</taxon>
        <taxon>Spermatophyta</taxon>
        <taxon>Magnoliopsida</taxon>
        <taxon>Liliopsida</taxon>
        <taxon>Poales</taxon>
        <taxon>Poaceae</taxon>
        <taxon>BOP clade</taxon>
        <taxon>Oryzoideae</taxon>
        <taxon>Oryzeae</taxon>
        <taxon>Oryzinae</taxon>
        <taxon>Oryza</taxon>
        <taxon>Oryza sativa</taxon>
    </lineage>
</organism>
<sequence>MADTGGRPEVSLATVRSPGHPAASTTAAAAADLGHADTGQEKPTVESAQPANGAAPMGECGTEYRGLPDGDAGGPMPSSARTVSMIPLIFLIFYEVSGGPFGIEDSVGAAGPLLAIIGFLVLPVIWSIPEALITAELGAMFPENGGYVVWVASALGPYWGFQQGWMKWLSGVIDNALYPVLFLDYLKSGVPALGGGAPRAFAVVGLTAVLTLLNYRGLTVVGWVAICLGVFSLLPFFVMGLIALPKLRPARWLVIDLHNVDWNLYLNTLFWNLNYWDSISTLAGEVKNPGKTLPKALFYAVIFVVVAYLYPLLAGTGAVPLDRGQWTDGYFADIAKLLGGAWLMWWVQSAAALSNMGMFVAEMSSDSYQLLGMAERGMLPSFFAARSRYGTPLAGILFSASGVLLLSMMSFQEIVAAENFLYCFGMLLEFVAFILHRVRRPDAARPYRVPLGTAGCVAMLVPPTALIAVVLALSTLKVAVVSLGAVAMGLVLQPALRFVEKKRWLRFSVNPDLPEIGVIRPPAAPDEPLVP</sequence>
<accession>Q6Z8D0</accession>
<accession>A0A0P0VNK8</accession>
<gene>
    <name type="primary">PUT1</name>
    <name type="ordered locus">Os02g0700500</name>
    <name type="ordered locus">LOC_Os02g47210</name>
    <name type="ORF">OJ1111_E07.11</name>
    <name type="ORF">OsJ_08051</name>
    <name type="ORF">P0459B01.40</name>
</gene>
<name>PUT1_ORYSJ</name>
<evidence type="ECO:0000255" key="1"/>
<evidence type="ECO:0000256" key="2">
    <source>
        <dbReference type="SAM" id="MobiDB-lite"/>
    </source>
</evidence>
<evidence type="ECO:0000269" key="3">
    <source>
    </source>
</evidence>
<evidence type="ECO:0000305" key="4"/>
<evidence type="ECO:0000305" key="5">
    <source>
    </source>
</evidence>
<comment type="function">
    <text evidence="3">Cell membrane polyamine/proton symporter involved in the polyamine uptake in cells. Possesses high affinity for spermidine and lower affinity for spermine and putrescine. Transports paraquat, a polyamine analog, and thus confers sensitivity to this chemical which is used as a herbicide.</text>
</comment>
<comment type="biophysicochemical properties">
    <kinetics>
        <KM evidence="3">15.2 uM for spermidine</KM>
        <Vmax evidence="3">12.0 pmol/min/mg enzyme toward spermidine</Vmax>
    </kinetics>
</comment>
<comment type="subcellular location">
    <subcellularLocation>
        <location evidence="5">Cell membrane</location>
        <topology evidence="5">Multi-pass membrane protein</topology>
    </subcellularLocation>
    <text>Plasma membrane.</text>
</comment>
<comment type="tissue specificity">
    <text evidence="3">Expressed in seedling roots, leaves, stems, flowers and siliques.</text>
</comment>
<comment type="similarity">
    <text evidence="4">Belongs to the amino acid-polyamine-organocation (APC) superfamily. Polyamine:cation symporter (PHS) (TC 2.A.3.12) family.</text>
</comment>
<keyword id="KW-1003">Cell membrane</keyword>
<keyword id="KW-0472">Membrane</keyword>
<keyword id="KW-1185">Reference proteome</keyword>
<keyword id="KW-0769">Symport</keyword>
<keyword id="KW-0812">Transmembrane</keyword>
<keyword id="KW-1133">Transmembrane helix</keyword>
<keyword id="KW-0813">Transport</keyword>
<feature type="chain" id="PRO_0000418913" description="Polyamine transporter PUT1">
    <location>
        <begin position="1"/>
        <end position="531"/>
    </location>
</feature>
<feature type="transmembrane region" description="Helical" evidence="1">
    <location>
        <begin position="83"/>
        <end position="103"/>
    </location>
</feature>
<feature type="transmembrane region" description="Helical" evidence="1">
    <location>
        <begin position="113"/>
        <end position="133"/>
    </location>
</feature>
<feature type="transmembrane region" description="Helical" evidence="1">
    <location>
        <begin position="147"/>
        <end position="167"/>
    </location>
</feature>
<feature type="transmembrane region" description="Helical" evidence="1">
    <location>
        <begin position="193"/>
        <end position="213"/>
    </location>
</feature>
<feature type="transmembrane region" description="Helical" evidence="1">
    <location>
        <begin position="224"/>
        <end position="244"/>
    </location>
</feature>
<feature type="transmembrane region" description="Helical" evidence="1">
    <location>
        <begin position="262"/>
        <end position="284"/>
    </location>
</feature>
<feature type="transmembrane region" description="Helical" evidence="1">
    <location>
        <begin position="296"/>
        <end position="316"/>
    </location>
</feature>
<feature type="transmembrane region" description="Helical" evidence="1">
    <location>
        <begin position="341"/>
        <end position="361"/>
    </location>
</feature>
<feature type="transmembrane region" description="Helical" evidence="1">
    <location>
        <begin position="391"/>
        <end position="411"/>
    </location>
</feature>
<feature type="transmembrane region" description="Helical" evidence="1">
    <location>
        <begin position="414"/>
        <end position="434"/>
    </location>
</feature>
<feature type="transmembrane region" description="Helical" evidence="1">
    <location>
        <begin position="453"/>
        <end position="473"/>
    </location>
</feature>
<feature type="transmembrane region" description="Helical" evidence="1">
    <location>
        <begin position="476"/>
        <end position="496"/>
    </location>
</feature>
<feature type="region of interest" description="Disordered" evidence="2">
    <location>
        <begin position="1"/>
        <end position="76"/>
    </location>
</feature>
<feature type="compositionally biased region" description="Low complexity" evidence="2">
    <location>
        <begin position="17"/>
        <end position="33"/>
    </location>
</feature>
<feature type="compositionally biased region" description="Basic and acidic residues" evidence="2">
    <location>
        <begin position="34"/>
        <end position="44"/>
    </location>
</feature>
<dbReference type="EMBL" id="AP003994">
    <property type="protein sequence ID" value="BAD07518.1"/>
    <property type="molecule type" value="Genomic_DNA"/>
</dbReference>
<dbReference type="EMBL" id="AP004778">
    <property type="protein sequence ID" value="BAD07889.1"/>
    <property type="molecule type" value="Genomic_DNA"/>
</dbReference>
<dbReference type="EMBL" id="AP008208">
    <property type="protein sequence ID" value="BAF09754.1"/>
    <property type="molecule type" value="Genomic_DNA"/>
</dbReference>
<dbReference type="EMBL" id="AP014958">
    <property type="protein sequence ID" value="BAS80462.1"/>
    <property type="molecule type" value="Genomic_DNA"/>
</dbReference>
<dbReference type="EMBL" id="CM000139">
    <property type="protein sequence ID" value="EAZ24299.1"/>
    <property type="molecule type" value="Genomic_DNA"/>
</dbReference>
<dbReference type="EMBL" id="AK068055">
    <property type="status" value="NOT_ANNOTATED_CDS"/>
    <property type="molecule type" value="mRNA"/>
</dbReference>
<dbReference type="SMR" id="Q6Z8D0"/>
<dbReference type="FunCoup" id="Q6Z8D0">
    <property type="interactions" value="32"/>
</dbReference>
<dbReference type="STRING" id="39947.Q6Z8D0"/>
<dbReference type="TCDB" id="2.A.3.12.5">
    <property type="family name" value="the amino acid-polyamine-organocation (apc) family"/>
</dbReference>
<dbReference type="PaxDb" id="39947-Q6Z8D0"/>
<dbReference type="EnsemblPlants" id="Os02t0700500-01">
    <property type="protein sequence ID" value="Os02t0700500-01"/>
    <property type="gene ID" value="Os02g0700500"/>
</dbReference>
<dbReference type="Gramene" id="Os02t0700500-01">
    <property type="protein sequence ID" value="Os02t0700500-01"/>
    <property type="gene ID" value="Os02g0700500"/>
</dbReference>
<dbReference type="KEGG" id="dosa:Os02g0700500"/>
<dbReference type="eggNOG" id="KOG1287">
    <property type="taxonomic scope" value="Eukaryota"/>
</dbReference>
<dbReference type="HOGENOM" id="CLU_007946_17_3_1"/>
<dbReference type="InParanoid" id="Q6Z8D0"/>
<dbReference type="OMA" id="FPQDGGY"/>
<dbReference type="Proteomes" id="UP000000763">
    <property type="component" value="Chromosome 2"/>
</dbReference>
<dbReference type="Proteomes" id="UP000007752">
    <property type="component" value="Chromosome 2"/>
</dbReference>
<dbReference type="Proteomes" id="UP000059680">
    <property type="component" value="Chromosome 2"/>
</dbReference>
<dbReference type="GO" id="GO:0005886">
    <property type="term" value="C:plasma membrane"/>
    <property type="evidence" value="ECO:0007669"/>
    <property type="project" value="UniProtKB-SubCell"/>
</dbReference>
<dbReference type="GO" id="GO:0015203">
    <property type="term" value="F:polyamine transmembrane transporter activity"/>
    <property type="evidence" value="ECO:0000314"/>
    <property type="project" value="UniProtKB"/>
</dbReference>
<dbReference type="GO" id="GO:0015293">
    <property type="term" value="F:symporter activity"/>
    <property type="evidence" value="ECO:0007669"/>
    <property type="project" value="UniProtKB-KW"/>
</dbReference>
<dbReference type="GO" id="GO:0015846">
    <property type="term" value="P:polyamine transport"/>
    <property type="evidence" value="ECO:0000314"/>
    <property type="project" value="UniProtKB"/>
</dbReference>
<dbReference type="FunFam" id="1.20.1740.10:FF:000041">
    <property type="entry name" value="Amino acid permease, putative"/>
    <property type="match status" value="1"/>
</dbReference>
<dbReference type="Gene3D" id="1.20.1740.10">
    <property type="entry name" value="Amino acid/polyamine transporter I"/>
    <property type="match status" value="1"/>
</dbReference>
<dbReference type="InterPro" id="IPR002293">
    <property type="entry name" value="AA/rel_permease1"/>
</dbReference>
<dbReference type="InterPro" id="IPR044566">
    <property type="entry name" value="RMV1-like"/>
</dbReference>
<dbReference type="PANTHER" id="PTHR45826">
    <property type="entry name" value="POLYAMINE TRANSPORTER PUT1"/>
    <property type="match status" value="1"/>
</dbReference>
<dbReference type="PANTHER" id="PTHR45826:SF26">
    <property type="entry name" value="POLYAMINE TRANSPORTER PUT1"/>
    <property type="match status" value="1"/>
</dbReference>
<dbReference type="Pfam" id="PF13520">
    <property type="entry name" value="AA_permease_2"/>
    <property type="match status" value="1"/>
</dbReference>
<dbReference type="PIRSF" id="PIRSF006060">
    <property type="entry name" value="AA_transporter"/>
    <property type="match status" value="1"/>
</dbReference>
<proteinExistence type="evidence at protein level"/>